<protein>
    <recommendedName>
        <fullName evidence="1">3-octaprenyl-4-hydroxybenzoate carboxy-lyase</fullName>
        <ecNumber evidence="1">4.1.1.98</ecNumber>
    </recommendedName>
    <alternativeName>
        <fullName evidence="1">Polyprenyl p-hydroxybenzoate decarboxylase</fullName>
    </alternativeName>
</protein>
<gene>
    <name evidence="1" type="primary">ubiD</name>
    <name type="ordered locus">Bcen_0473</name>
</gene>
<organism>
    <name type="scientific">Burkholderia orbicola (strain AU 1054)</name>
    <dbReference type="NCBI Taxonomy" id="331271"/>
    <lineage>
        <taxon>Bacteria</taxon>
        <taxon>Pseudomonadati</taxon>
        <taxon>Pseudomonadota</taxon>
        <taxon>Betaproteobacteria</taxon>
        <taxon>Burkholderiales</taxon>
        <taxon>Burkholderiaceae</taxon>
        <taxon>Burkholderia</taxon>
        <taxon>Burkholderia cepacia complex</taxon>
        <taxon>Burkholderia orbicola</taxon>
    </lineage>
</organism>
<keyword id="KW-1003">Cell membrane</keyword>
<keyword id="KW-0210">Decarboxylase</keyword>
<keyword id="KW-0285">Flavoprotein</keyword>
<keyword id="KW-0288">FMN</keyword>
<keyword id="KW-0456">Lyase</keyword>
<keyword id="KW-0464">Manganese</keyword>
<keyword id="KW-0472">Membrane</keyword>
<keyword id="KW-0479">Metal-binding</keyword>
<keyword id="KW-0831">Ubiquinone biosynthesis</keyword>
<comment type="function">
    <text evidence="1">Catalyzes the decarboxylation of 3-octaprenyl-4-hydroxy benzoate to 2-octaprenylphenol, an intermediate step in ubiquinone biosynthesis.</text>
</comment>
<comment type="catalytic activity">
    <reaction evidence="1">
        <text>a 4-hydroxy-3-(all-trans-polyprenyl)benzoate + H(+) = a 2-(all-trans-polyprenyl)phenol + CO2</text>
        <dbReference type="Rhea" id="RHEA:41680"/>
        <dbReference type="Rhea" id="RHEA-COMP:9514"/>
        <dbReference type="Rhea" id="RHEA-COMP:9516"/>
        <dbReference type="ChEBI" id="CHEBI:1269"/>
        <dbReference type="ChEBI" id="CHEBI:15378"/>
        <dbReference type="ChEBI" id="CHEBI:16526"/>
        <dbReference type="ChEBI" id="CHEBI:78396"/>
        <dbReference type="EC" id="4.1.1.98"/>
    </reaction>
</comment>
<comment type="cofactor">
    <cofactor evidence="1">
        <name>prenylated FMN</name>
        <dbReference type="ChEBI" id="CHEBI:87746"/>
    </cofactor>
    <text evidence="1">Binds 1 prenylated FMN per subunit.</text>
</comment>
<comment type="cofactor">
    <cofactor evidence="1">
        <name>Mn(2+)</name>
        <dbReference type="ChEBI" id="CHEBI:29035"/>
    </cofactor>
</comment>
<comment type="pathway">
    <text evidence="1">Cofactor biosynthesis; ubiquinone biosynthesis.</text>
</comment>
<comment type="subunit">
    <text evidence="1">Homohexamer.</text>
</comment>
<comment type="subcellular location">
    <subcellularLocation>
        <location evidence="1">Cell membrane</location>
        <topology evidence="1">Peripheral membrane protein</topology>
    </subcellularLocation>
</comment>
<comment type="similarity">
    <text evidence="1">Belongs to the UbiD family.</text>
</comment>
<comment type="sequence caution" evidence="2">
    <conflict type="erroneous initiation">
        <sequence resource="EMBL-CDS" id="ABF75385"/>
    </conflict>
</comment>
<dbReference type="EC" id="4.1.1.98" evidence="1"/>
<dbReference type="EMBL" id="CP000378">
    <property type="protein sequence ID" value="ABF75385.1"/>
    <property type="status" value="ALT_INIT"/>
    <property type="molecule type" value="Genomic_DNA"/>
</dbReference>
<dbReference type="SMR" id="Q1BYC0"/>
<dbReference type="HOGENOM" id="CLU_023348_4_1_4"/>
<dbReference type="UniPathway" id="UPA00232"/>
<dbReference type="GO" id="GO:0005829">
    <property type="term" value="C:cytosol"/>
    <property type="evidence" value="ECO:0007669"/>
    <property type="project" value="TreeGrafter"/>
</dbReference>
<dbReference type="GO" id="GO:0005886">
    <property type="term" value="C:plasma membrane"/>
    <property type="evidence" value="ECO:0007669"/>
    <property type="project" value="UniProtKB-SubCell"/>
</dbReference>
<dbReference type="GO" id="GO:0008694">
    <property type="term" value="F:3-octaprenyl-4-hydroxybenzoate carboxy-lyase activity"/>
    <property type="evidence" value="ECO:0007669"/>
    <property type="project" value="UniProtKB-UniRule"/>
</dbReference>
<dbReference type="GO" id="GO:0046872">
    <property type="term" value="F:metal ion binding"/>
    <property type="evidence" value="ECO:0007669"/>
    <property type="project" value="UniProtKB-KW"/>
</dbReference>
<dbReference type="GO" id="GO:0006744">
    <property type="term" value="P:ubiquinone biosynthetic process"/>
    <property type="evidence" value="ECO:0007669"/>
    <property type="project" value="UniProtKB-UniRule"/>
</dbReference>
<dbReference type="FunFam" id="1.20.5.570:FF:000001">
    <property type="entry name" value="3-octaprenyl-4-hydroxybenzoate carboxy-lyase"/>
    <property type="match status" value="1"/>
</dbReference>
<dbReference type="FunFam" id="3.40.1670.10:FF:000001">
    <property type="entry name" value="3-octaprenyl-4-hydroxybenzoate carboxy-lyase"/>
    <property type="match status" value="1"/>
</dbReference>
<dbReference type="Gene3D" id="1.20.5.570">
    <property type="entry name" value="Single helix bin"/>
    <property type="match status" value="1"/>
</dbReference>
<dbReference type="Gene3D" id="3.40.1670.10">
    <property type="entry name" value="UbiD C-terminal domain-like"/>
    <property type="match status" value="1"/>
</dbReference>
<dbReference type="HAMAP" id="MF_01636">
    <property type="entry name" value="UbiD"/>
    <property type="match status" value="1"/>
</dbReference>
<dbReference type="InterPro" id="IPR002830">
    <property type="entry name" value="UbiD"/>
</dbReference>
<dbReference type="InterPro" id="IPR049381">
    <property type="entry name" value="UbiD-like_C"/>
</dbReference>
<dbReference type="InterPro" id="IPR049383">
    <property type="entry name" value="UbiD-like_N"/>
</dbReference>
<dbReference type="InterPro" id="IPR023677">
    <property type="entry name" value="UbiD_bacteria"/>
</dbReference>
<dbReference type="InterPro" id="IPR048304">
    <property type="entry name" value="UbiD_Rift_dom"/>
</dbReference>
<dbReference type="NCBIfam" id="TIGR00148">
    <property type="entry name" value="UbiD family decarboxylase"/>
    <property type="match status" value="2"/>
</dbReference>
<dbReference type="PANTHER" id="PTHR30108">
    <property type="entry name" value="3-OCTAPRENYL-4-HYDROXYBENZOATE CARBOXY-LYASE-RELATED"/>
    <property type="match status" value="1"/>
</dbReference>
<dbReference type="PANTHER" id="PTHR30108:SF17">
    <property type="entry name" value="FERULIC ACID DECARBOXYLASE 1"/>
    <property type="match status" value="1"/>
</dbReference>
<dbReference type="Pfam" id="PF01977">
    <property type="entry name" value="UbiD"/>
    <property type="match status" value="1"/>
</dbReference>
<dbReference type="Pfam" id="PF20696">
    <property type="entry name" value="UbiD_C"/>
    <property type="match status" value="1"/>
</dbReference>
<dbReference type="Pfam" id="PF20695">
    <property type="entry name" value="UbiD_N"/>
    <property type="match status" value="1"/>
</dbReference>
<dbReference type="SUPFAM" id="SSF50475">
    <property type="entry name" value="FMN-binding split barrel"/>
    <property type="match status" value="1"/>
</dbReference>
<dbReference type="SUPFAM" id="SSF143968">
    <property type="entry name" value="UbiD C-terminal domain-like"/>
    <property type="match status" value="1"/>
</dbReference>
<name>UBID_BURO1</name>
<reference key="1">
    <citation type="submission" date="2006-05" db="EMBL/GenBank/DDBJ databases">
        <title>Complete sequence of chromosome 1 of Burkholderia cenocepacia AU 1054.</title>
        <authorList>
            <consortium name="US DOE Joint Genome Institute"/>
            <person name="Copeland A."/>
            <person name="Lucas S."/>
            <person name="Lapidus A."/>
            <person name="Barry K."/>
            <person name="Detter J.C."/>
            <person name="Glavina del Rio T."/>
            <person name="Hammon N."/>
            <person name="Israni S."/>
            <person name="Dalin E."/>
            <person name="Tice H."/>
            <person name="Pitluck S."/>
            <person name="Chain P."/>
            <person name="Malfatti S."/>
            <person name="Shin M."/>
            <person name="Vergez L."/>
            <person name="Schmutz J."/>
            <person name="Larimer F."/>
            <person name="Land M."/>
            <person name="Hauser L."/>
            <person name="Kyrpides N."/>
            <person name="Lykidis A."/>
            <person name="LiPuma J.J."/>
            <person name="Konstantinidis K."/>
            <person name="Tiedje J.M."/>
            <person name="Richardson P."/>
        </authorList>
    </citation>
    <scope>NUCLEOTIDE SEQUENCE [LARGE SCALE GENOMIC DNA]</scope>
    <source>
        <strain>AU 1054</strain>
    </source>
</reference>
<proteinExistence type="inferred from homology"/>
<accession>Q1BYC0</accession>
<feature type="chain" id="PRO_0000267652" description="3-octaprenyl-4-hydroxybenzoate carboxy-lyase">
    <location>
        <begin position="1"/>
        <end position="518"/>
    </location>
</feature>
<feature type="active site" description="Proton donor" evidence="1">
    <location>
        <position position="318"/>
    </location>
</feature>
<feature type="binding site" evidence="1">
    <location>
        <position position="177"/>
    </location>
    <ligand>
        <name>Mn(2+)</name>
        <dbReference type="ChEBI" id="CHEBI:29035"/>
    </ligand>
</feature>
<feature type="binding site" evidence="1">
    <location>
        <begin position="180"/>
        <end position="182"/>
    </location>
    <ligand>
        <name>prenylated FMN</name>
        <dbReference type="ChEBI" id="CHEBI:87746"/>
    </ligand>
</feature>
<feature type="binding site" evidence="1">
    <location>
        <begin position="194"/>
        <end position="196"/>
    </location>
    <ligand>
        <name>prenylated FMN</name>
        <dbReference type="ChEBI" id="CHEBI:87746"/>
    </ligand>
</feature>
<feature type="binding site" evidence="1">
    <location>
        <begin position="199"/>
        <end position="200"/>
    </location>
    <ligand>
        <name>prenylated FMN</name>
        <dbReference type="ChEBI" id="CHEBI:87746"/>
    </ligand>
</feature>
<feature type="binding site" evidence="1">
    <location>
        <position position="243"/>
    </location>
    <ligand>
        <name>Mn(2+)</name>
        <dbReference type="ChEBI" id="CHEBI:29035"/>
    </ligand>
</feature>
<sequence length="518" mass="56957">MKYKDLRDFIQRLEALGELRRVTQPVSPVLEMTELCDRVLRAGGPALLFNAPPGNAFPVLGNLFGTPRRVALGMGVDAGDDAALGSLRDLGRLLSALKEPDPPKSLKDAGKLLSLAKAVWDMAPKSVSSPPCQEIVWEGADVDLNKLPIQTCWPGDAGPLVTWGLTVTRGPNKSRQNLGIYRQQLIGRNKLIMRWLAHRGGALDFREFALQNPGKPYPVAVVLGADPATTLGAVTPVPDSLSEYQFAGLLRGSRTELAKCLTPGVDTLQVPARAEIVLEGFIHPQEGAPAPAPAGAPPRPAGNAAAAYEHALEGPYGDHTGYYNEQEWFPVFTVERITMRRDAIYHSTYTGKPPDEPAVLGVALNEVFVPLLQKQFTEITDFYLPPEGCSYRMAIVQMKKSYAGHAKRVMFGVWSFLRQFMYTKFIVVVDEDVNIRDWKEVIWAITTRVDPVRDTVMVDSTPIDYLDFASPVAGLGSKMGLDATNKWPGETSREWGRPIEMDAAVKARVDRLWQEIGL</sequence>
<evidence type="ECO:0000255" key="1">
    <source>
        <dbReference type="HAMAP-Rule" id="MF_01636"/>
    </source>
</evidence>
<evidence type="ECO:0000305" key="2"/>